<organism>
    <name type="scientific">Bos taurus</name>
    <name type="common">Bovine</name>
    <dbReference type="NCBI Taxonomy" id="9913"/>
    <lineage>
        <taxon>Eukaryota</taxon>
        <taxon>Metazoa</taxon>
        <taxon>Chordata</taxon>
        <taxon>Craniata</taxon>
        <taxon>Vertebrata</taxon>
        <taxon>Euteleostomi</taxon>
        <taxon>Mammalia</taxon>
        <taxon>Eutheria</taxon>
        <taxon>Laurasiatheria</taxon>
        <taxon>Artiodactyla</taxon>
        <taxon>Ruminantia</taxon>
        <taxon>Pecora</taxon>
        <taxon>Bovidae</taxon>
        <taxon>Bovinae</taxon>
        <taxon>Bos</taxon>
    </lineage>
</organism>
<gene>
    <name type="primary">TMEM208</name>
</gene>
<name>TM208_BOVIN</name>
<sequence>MAPKGKVGTRGKKQIFEENKETLKFYLRIILGANAIYCLVTLVVFYSSASFWAWMALLFSLAVYGASYHSMSSMARAAFSEDGALVDGGMDLNMEQGMAEHLKDVILLTAIVQVLSCFSLYIWSFWLLAPGRALYLLWVNVLGPWFTADSGAPAPEHNEKRQRRQERRQMKRL</sequence>
<accession>Q3SZZ5</accession>
<dbReference type="EMBL" id="BC102636">
    <property type="protein sequence ID" value="AAI02637.1"/>
    <property type="molecule type" value="mRNA"/>
</dbReference>
<dbReference type="RefSeq" id="NP_001029457.1">
    <property type="nucleotide sequence ID" value="NM_001034285.2"/>
</dbReference>
<dbReference type="FunCoup" id="Q3SZZ5">
    <property type="interactions" value="1148"/>
</dbReference>
<dbReference type="STRING" id="9913.ENSBTAP00000003002"/>
<dbReference type="PaxDb" id="9913-ENSBTAP00000003002"/>
<dbReference type="Ensembl" id="ENSBTAT00000003002.3">
    <property type="protein sequence ID" value="ENSBTAP00000003002.2"/>
    <property type="gene ID" value="ENSBTAG00000002327.6"/>
</dbReference>
<dbReference type="GeneID" id="507222"/>
<dbReference type="KEGG" id="bta:507222"/>
<dbReference type="CTD" id="29100"/>
<dbReference type="VEuPathDB" id="HostDB:ENSBTAG00000002327"/>
<dbReference type="VGNC" id="VGNC:36030">
    <property type="gene designation" value="TMEM208"/>
</dbReference>
<dbReference type="eggNOG" id="KOG3269">
    <property type="taxonomic scope" value="Eukaryota"/>
</dbReference>
<dbReference type="GeneTree" id="ENSGT00390000008139"/>
<dbReference type="HOGENOM" id="CLU_094308_3_0_1"/>
<dbReference type="InParanoid" id="Q3SZZ5"/>
<dbReference type="OMA" id="PIRAGWM"/>
<dbReference type="OrthoDB" id="10012212at2759"/>
<dbReference type="TreeFam" id="TF318118"/>
<dbReference type="Proteomes" id="UP000009136">
    <property type="component" value="Chromosome 18"/>
</dbReference>
<dbReference type="Bgee" id="ENSBTAG00000002327">
    <property type="expression patterns" value="Expressed in rumen papilla and 109 other cell types or tissues"/>
</dbReference>
<dbReference type="GO" id="GO:0005789">
    <property type="term" value="C:endoplasmic reticulum membrane"/>
    <property type="evidence" value="ECO:0000250"/>
    <property type="project" value="UniProtKB"/>
</dbReference>
<dbReference type="GO" id="GO:0043231">
    <property type="term" value="C:intracellular membrane-bounded organelle"/>
    <property type="evidence" value="ECO:0000318"/>
    <property type="project" value="GO_Central"/>
</dbReference>
<dbReference type="GO" id="GO:0005773">
    <property type="term" value="C:vacuole"/>
    <property type="evidence" value="ECO:0007669"/>
    <property type="project" value="GOC"/>
</dbReference>
<dbReference type="GO" id="GO:0006914">
    <property type="term" value="P:autophagy"/>
    <property type="evidence" value="ECO:0007669"/>
    <property type="project" value="UniProtKB-KW"/>
</dbReference>
<dbReference type="GO" id="GO:0006624">
    <property type="term" value="P:vacuolar protein processing"/>
    <property type="evidence" value="ECO:0000318"/>
    <property type="project" value="GO_Central"/>
</dbReference>
<dbReference type="InterPro" id="IPR008506">
    <property type="entry name" value="SND2/TMEM208"/>
</dbReference>
<dbReference type="PANTHER" id="PTHR13505">
    <property type="entry name" value="TRANSMEMBRANE PROTEIN 208"/>
    <property type="match status" value="1"/>
</dbReference>
<dbReference type="PANTHER" id="PTHR13505:SF7">
    <property type="entry name" value="TRANSMEMBRANE PROTEIN 208"/>
    <property type="match status" value="1"/>
</dbReference>
<dbReference type="Pfam" id="PF05620">
    <property type="entry name" value="TMEM208_SND2"/>
    <property type="match status" value="1"/>
</dbReference>
<comment type="function">
    <text evidence="1">May function as a negative regulator of endoplasmic reticulum-stress induced autophagy.</text>
</comment>
<comment type="subcellular location">
    <subcellularLocation>
        <location evidence="1">Endoplasmic reticulum membrane</location>
        <topology evidence="2">Multi-pass membrane protein</topology>
    </subcellularLocation>
</comment>
<comment type="similarity">
    <text evidence="4">Belongs to the TMEM208 family.</text>
</comment>
<reference key="1">
    <citation type="submission" date="2005-08" db="EMBL/GenBank/DDBJ databases">
        <authorList>
            <consortium name="NIH - Mammalian Gene Collection (MGC) project"/>
        </authorList>
    </citation>
    <scope>NUCLEOTIDE SEQUENCE [LARGE SCALE MRNA]</scope>
    <source>
        <strain>Hereford</strain>
        <tissue>Testis</tissue>
    </source>
</reference>
<proteinExistence type="evidence at transcript level"/>
<feature type="chain" id="PRO_0000325966" description="Transmembrane protein 208">
    <location>
        <begin position="1"/>
        <end position="173"/>
    </location>
</feature>
<feature type="transmembrane region" description="Helical" evidence="2">
    <location>
        <begin position="25"/>
        <end position="45"/>
    </location>
</feature>
<feature type="transmembrane region" description="Helical" evidence="2">
    <location>
        <begin position="51"/>
        <end position="68"/>
    </location>
</feature>
<feature type="transmembrane region" description="Helical" evidence="2">
    <location>
        <begin position="105"/>
        <end position="129"/>
    </location>
</feature>
<feature type="region of interest" description="Disordered" evidence="3">
    <location>
        <begin position="153"/>
        <end position="173"/>
    </location>
</feature>
<feature type="compositionally biased region" description="Basic residues" evidence="3">
    <location>
        <begin position="160"/>
        <end position="173"/>
    </location>
</feature>
<feature type="modified residue" description="N-acetylmethionine" evidence="1">
    <location>
        <position position="1"/>
    </location>
</feature>
<protein>
    <recommendedName>
        <fullName>Transmembrane protein 208</fullName>
    </recommendedName>
</protein>
<keyword id="KW-0007">Acetylation</keyword>
<keyword id="KW-0072">Autophagy</keyword>
<keyword id="KW-0256">Endoplasmic reticulum</keyword>
<keyword id="KW-0472">Membrane</keyword>
<keyword id="KW-1185">Reference proteome</keyword>
<keyword id="KW-0812">Transmembrane</keyword>
<keyword id="KW-1133">Transmembrane helix</keyword>
<evidence type="ECO:0000250" key="1">
    <source>
        <dbReference type="UniProtKB" id="Q9BTX3"/>
    </source>
</evidence>
<evidence type="ECO:0000255" key="2"/>
<evidence type="ECO:0000256" key="3">
    <source>
        <dbReference type="SAM" id="MobiDB-lite"/>
    </source>
</evidence>
<evidence type="ECO:0000305" key="4"/>